<name>TESS_TERSU</name>
<keyword id="KW-0165">Cleavage on pair of basic residues</keyword>
<keyword id="KW-1015">Disulfide bond</keyword>
<keyword id="KW-0964">Secreted</keyword>
<keyword id="KW-0732">Signal</keyword>
<reference key="1">
    <citation type="journal article" date="2015" name="Genome Biol. Evol.">
        <title>Molecular diversity and gene evolution of the venom arsenal of Terebridae predatory marine snails.</title>
        <authorList>
            <person name="Gorson J."/>
            <person name="Ramrattan G."/>
            <person name="Verdes A."/>
            <person name="Wright E.M."/>
            <person name="Kantor Y."/>
            <person name="Rajaram Srinivasan R."/>
            <person name="Musunuri R."/>
            <person name="Packer D."/>
            <person name="Albano G."/>
            <person name="Qiu W.G."/>
            <person name="Holford M."/>
        </authorList>
    </citation>
    <scope>NUCLEOTIDE SEQUENCE [MRNA]</scope>
    <source>
        <tissue>Venom duct</tissue>
    </source>
</reference>
<organism>
    <name type="scientific">Terebra subulata</name>
    <name type="common">Chocolate spotted auger</name>
    <name type="synonym">Buccinum subulatum</name>
    <dbReference type="NCBI Taxonomy" id="89435"/>
    <lineage>
        <taxon>Eukaryota</taxon>
        <taxon>Metazoa</taxon>
        <taxon>Spiralia</taxon>
        <taxon>Lophotrochozoa</taxon>
        <taxon>Mollusca</taxon>
        <taxon>Gastropoda</taxon>
        <taxon>Caenogastropoda</taxon>
        <taxon>Neogastropoda</taxon>
        <taxon>Conoidea</taxon>
        <taxon>Terebridae</taxon>
        <taxon>Terebra</taxon>
    </lineage>
</organism>
<comment type="subcellular location">
    <subcellularLocation>
        <location evidence="5">Secreted</location>
    </subcellularLocation>
</comment>
<comment type="tissue specificity">
    <text evidence="5">Expressed by the venom duct.</text>
</comment>
<comment type="domain">
    <text evidence="4">The cysteine framework of the terepressin is C-C.</text>
</comment>
<comment type="PTM">
    <molecule>Terephysin</molecule>
    <text evidence="4">Contains 7 disulfide bonds.</text>
</comment>
<comment type="similarity">
    <text evidence="4">Belongs to the vasopressin/oxytocin family.</text>
</comment>
<accession>P0DN43</accession>
<evidence type="ECO:0000250" key="1">
    <source>
        <dbReference type="UniProtKB" id="P01175"/>
    </source>
</evidence>
<evidence type="ECO:0000255" key="2"/>
<evidence type="ECO:0000303" key="3">
    <source>
    </source>
</evidence>
<evidence type="ECO:0000305" key="4"/>
<evidence type="ECO:0000305" key="5">
    <source>
    </source>
</evidence>
<protein>
    <recommendedName>
        <fullName evidence="3">Terepressin/terephysin</fullName>
    </recommendedName>
    <alternativeName>
        <fullName evidence="3">Conopressin/Conophysin-like</fullName>
    </alternativeName>
    <component>
        <recommendedName>
            <fullName evidence="3">Terepressin</fullName>
        </recommendedName>
        <alternativeName>
            <fullName evidence="3">Conopressin-like</fullName>
        </alternativeName>
    </component>
    <component>
        <recommendedName>
            <fullName evidence="3">Terephysin</fullName>
        </recommendedName>
        <alternativeName>
            <fullName evidence="3">Conophysin-like</fullName>
        </alternativeName>
    </component>
</protein>
<sequence length="134" mass="14060">MKCSVLPRSRLSWTMCVLLLPLLMLMLEGGVQGCFIRNCPRGGKRAVDSVQPTRQCMSCGPEGVGQCVGPSICCGLAIGCLMGTSEAEVCQKENESSAPCAVSGRHCGMDNTGNCVADGICCVEDACSFNSLCR</sequence>
<feature type="signal peptide" evidence="2">
    <location>
        <begin position="1"/>
        <end position="33"/>
    </location>
</feature>
<feature type="peptide" id="PRO_0000435049" description="Terepressin">
    <location>
        <begin position="34"/>
        <end position="42"/>
    </location>
</feature>
<feature type="propeptide" id="PRO_0000435050" evidence="5">
    <location>
        <begin position="44"/>
        <end position="50"/>
    </location>
</feature>
<feature type="chain" id="PRO_0000435051" description="Terephysin">
    <location>
        <begin position="51"/>
        <end position="134"/>
    </location>
</feature>
<feature type="disulfide bond" evidence="4">
    <location>
        <begin position="34"/>
        <end position="39"/>
    </location>
</feature>
<feature type="disulfide bond" evidence="1">
    <location>
        <begin position="56"/>
        <end position="100"/>
    </location>
</feature>
<feature type="disulfide bond" evidence="1">
    <location>
        <begin position="59"/>
        <end position="73"/>
    </location>
</feature>
<feature type="disulfide bond" evidence="1">
    <location>
        <begin position="67"/>
        <end position="90"/>
    </location>
</feature>
<feature type="disulfide bond" evidence="1">
    <location>
        <begin position="74"/>
        <end position="80"/>
    </location>
</feature>
<feature type="disulfide bond" evidence="1">
    <location>
        <begin position="107"/>
        <end position="121"/>
    </location>
</feature>
<feature type="disulfide bond" evidence="1">
    <location>
        <begin position="115"/>
        <end position="133"/>
    </location>
</feature>
<feature type="disulfide bond" evidence="1">
    <location>
        <begin position="122"/>
        <end position="127"/>
    </location>
</feature>
<dbReference type="SMR" id="P0DN43"/>
<dbReference type="GO" id="GO:0005615">
    <property type="term" value="C:extracellular space"/>
    <property type="evidence" value="ECO:0007669"/>
    <property type="project" value="TreeGrafter"/>
</dbReference>
<dbReference type="GO" id="GO:0030141">
    <property type="term" value="C:secretory granule"/>
    <property type="evidence" value="ECO:0007669"/>
    <property type="project" value="TreeGrafter"/>
</dbReference>
<dbReference type="GO" id="GO:0005185">
    <property type="term" value="F:neurohypophyseal hormone activity"/>
    <property type="evidence" value="ECO:0007669"/>
    <property type="project" value="InterPro"/>
</dbReference>
<dbReference type="Gene3D" id="2.60.9.10">
    <property type="entry name" value="Neurohypophysial hormone domain"/>
    <property type="match status" value="1"/>
</dbReference>
<dbReference type="InterPro" id="IPR000981">
    <property type="entry name" value="Neurhyp_horm"/>
</dbReference>
<dbReference type="InterPro" id="IPR036387">
    <property type="entry name" value="Neurhyp_horm_dom_sf"/>
</dbReference>
<dbReference type="InterPro" id="IPR022423">
    <property type="entry name" value="Neurohypophysial_hormone_CS"/>
</dbReference>
<dbReference type="PANTHER" id="PTHR11681:SF5">
    <property type="entry name" value="ISOTOCIN"/>
    <property type="match status" value="1"/>
</dbReference>
<dbReference type="PANTHER" id="PTHR11681">
    <property type="entry name" value="NEUROPHYSIN"/>
    <property type="match status" value="1"/>
</dbReference>
<dbReference type="Pfam" id="PF00184">
    <property type="entry name" value="Hormone_5"/>
    <property type="match status" value="1"/>
</dbReference>
<dbReference type="PIRSF" id="PIRSF001815">
    <property type="entry name" value="Nonapeptide_hormone_precursor"/>
    <property type="match status" value="1"/>
</dbReference>
<dbReference type="PRINTS" id="PR00831">
    <property type="entry name" value="NEUROPHYSIN"/>
</dbReference>
<dbReference type="SMART" id="SM00003">
    <property type="entry name" value="NH"/>
    <property type="match status" value="1"/>
</dbReference>
<dbReference type="SUPFAM" id="SSF49606">
    <property type="entry name" value="Neurophysin II"/>
    <property type="match status" value="1"/>
</dbReference>
<dbReference type="PROSITE" id="PS00264">
    <property type="entry name" value="NEUROHYPOPHYS_HORM"/>
    <property type="match status" value="1"/>
</dbReference>
<proteinExistence type="evidence at transcript level"/>